<keyword id="KW-0256">Endoplasmic reticulum</keyword>
<keyword id="KW-0443">Lipid metabolism</keyword>
<keyword id="KW-0472">Membrane</keyword>
<keyword id="KW-1185">Reference proteome</keyword>
<keyword id="KW-0812">Transmembrane</keyword>
<keyword id="KW-1133">Transmembrane helix</keyword>
<protein>
    <recommendedName>
        <fullName evidence="4">Seipin-1</fullName>
        <shortName evidence="4">AtSEIPIN1</shortName>
    </recommendedName>
</protein>
<dbReference type="EMBL" id="AB005242">
    <property type="protein sequence ID" value="BAB09613.1"/>
    <property type="molecule type" value="Genomic_DNA"/>
</dbReference>
<dbReference type="EMBL" id="CP002688">
    <property type="protein sequence ID" value="AED92296.1"/>
    <property type="molecule type" value="Genomic_DNA"/>
</dbReference>
<dbReference type="RefSeq" id="NP_197150.1">
    <property type="nucleotide sequence ID" value="NM_121651.2"/>
</dbReference>
<dbReference type="SMR" id="Q9FFD9"/>
<dbReference type="FunCoup" id="Q9FFD9">
    <property type="interactions" value="445"/>
</dbReference>
<dbReference type="STRING" id="3702.Q9FFD9"/>
<dbReference type="PaxDb" id="3702-AT5G16460.1"/>
<dbReference type="ProteomicsDB" id="232892"/>
<dbReference type="EnsemblPlants" id="AT5G16460.1">
    <property type="protein sequence ID" value="AT5G16460.1"/>
    <property type="gene ID" value="AT5G16460"/>
</dbReference>
<dbReference type="GeneID" id="831507"/>
<dbReference type="Gramene" id="AT5G16460.1">
    <property type="protein sequence ID" value="AT5G16460.1"/>
    <property type="gene ID" value="AT5G16460"/>
</dbReference>
<dbReference type="KEGG" id="ath:AT5G16460"/>
<dbReference type="Araport" id="AT5G16460"/>
<dbReference type="TAIR" id="AT5G16460">
    <property type="gene designation" value="SEIPIN1"/>
</dbReference>
<dbReference type="eggNOG" id="KOG4200">
    <property type="taxonomic scope" value="Eukaryota"/>
</dbReference>
<dbReference type="HOGENOM" id="CLU_035656_0_0_1"/>
<dbReference type="InParanoid" id="Q9FFD9"/>
<dbReference type="OMA" id="RHKEDYR"/>
<dbReference type="PhylomeDB" id="Q9FFD9"/>
<dbReference type="PRO" id="PR:Q9FFD9"/>
<dbReference type="Proteomes" id="UP000006548">
    <property type="component" value="Chromosome 5"/>
</dbReference>
<dbReference type="ExpressionAtlas" id="Q9FFD9">
    <property type="expression patterns" value="baseline and differential"/>
</dbReference>
<dbReference type="GO" id="GO:0005783">
    <property type="term" value="C:endoplasmic reticulum"/>
    <property type="evidence" value="ECO:0000314"/>
    <property type="project" value="UniProtKB"/>
</dbReference>
<dbReference type="GO" id="GO:0005789">
    <property type="term" value="C:endoplasmic reticulum membrane"/>
    <property type="evidence" value="ECO:0007669"/>
    <property type="project" value="UniProtKB-SubCell"/>
</dbReference>
<dbReference type="GO" id="GO:0140042">
    <property type="term" value="P:lipid droplet formation"/>
    <property type="evidence" value="ECO:0000316"/>
    <property type="project" value="TAIR"/>
</dbReference>
<dbReference type="GO" id="GO:0034389">
    <property type="term" value="P:lipid droplet organization"/>
    <property type="evidence" value="ECO:0000315"/>
    <property type="project" value="UniProtKB"/>
</dbReference>
<dbReference type="GO" id="GO:0006629">
    <property type="term" value="P:lipid metabolic process"/>
    <property type="evidence" value="ECO:0007669"/>
    <property type="project" value="UniProtKB-KW"/>
</dbReference>
<dbReference type="GO" id="GO:0009846">
    <property type="term" value="P:pollen germination"/>
    <property type="evidence" value="ECO:0000316"/>
    <property type="project" value="TAIR"/>
</dbReference>
<dbReference type="GO" id="GO:0080155">
    <property type="term" value="P:regulation of double fertilization forming a zygote and endosperm"/>
    <property type="evidence" value="ECO:0000316"/>
    <property type="project" value="TAIR"/>
</dbReference>
<dbReference type="GO" id="GO:0048316">
    <property type="term" value="P:seed development"/>
    <property type="evidence" value="ECO:0000315"/>
    <property type="project" value="TAIR"/>
</dbReference>
<dbReference type="GO" id="GO:0010162">
    <property type="term" value="P:seed dormancy process"/>
    <property type="evidence" value="ECO:0000316"/>
    <property type="project" value="TAIR"/>
</dbReference>
<dbReference type="GO" id="GO:0010344">
    <property type="term" value="P:seed oilbody biogenesis"/>
    <property type="evidence" value="ECO:0000315"/>
    <property type="project" value="UniProtKB"/>
</dbReference>
<dbReference type="CDD" id="cd23995">
    <property type="entry name" value="Seipin_BSCL2_like"/>
    <property type="match status" value="1"/>
</dbReference>
<dbReference type="InterPro" id="IPR009617">
    <property type="entry name" value="Seipin"/>
</dbReference>
<dbReference type="PANTHER" id="PTHR21212">
    <property type="entry name" value="BERNARDINELLI-SEIP CONGENITAL LIPODYSTROPHY 2 HOMOLOG BSCL2 PROTEIN"/>
    <property type="match status" value="1"/>
</dbReference>
<dbReference type="PANTHER" id="PTHR21212:SF5">
    <property type="entry name" value="SEIPIN-1"/>
    <property type="match status" value="1"/>
</dbReference>
<dbReference type="Pfam" id="PF06775">
    <property type="entry name" value="Seipin"/>
    <property type="match status" value="1"/>
</dbReference>
<comment type="function">
    <text evidence="3">Involved in lipid metabolism and lipid droplet (LD) morphology, number, and size. Facilitates the formation of large-sized LDs and modulates triacylglycerol accumulation. Induces probably a reorganization of the endoplasmic reticulum into LD-forming domains.</text>
</comment>
<comment type="subcellular location">
    <subcellularLocation>
        <location evidence="3">Endoplasmic reticulum membrane</location>
        <topology evidence="1">Multi-pass membrane protein</topology>
    </subcellularLocation>
    <text evidence="3">Localized to the lipid droplet-forming sites.</text>
</comment>
<comment type="tissue specificity">
    <text evidence="3">Expressed in seeds and young seedlings. Not detected in leaves.</text>
</comment>
<comment type="domain">
    <text evidence="3">The N-terminal domain (1-98) determines the lipid droplet size.</text>
</comment>
<comment type="miscellaneous">
    <text evidence="3">Knockdown mutants have a reduced accumulation of oil per seed and a reduced overall seed size.</text>
</comment>
<comment type="similarity">
    <text evidence="5">Belongs to the seipin family.</text>
</comment>
<accession>Q9FFD9</accession>
<proteinExistence type="evidence at transcript level"/>
<gene>
    <name evidence="5" type="primary">SEI1</name>
    <name evidence="6" type="ordered locus">At5g16460</name>
    <name evidence="7" type="ORF">MQK4.19</name>
</gene>
<evidence type="ECO:0000255" key="1"/>
<evidence type="ECO:0000256" key="2">
    <source>
        <dbReference type="SAM" id="MobiDB-lite"/>
    </source>
</evidence>
<evidence type="ECO:0000269" key="3">
    <source>
    </source>
</evidence>
<evidence type="ECO:0000303" key="4">
    <source>
    </source>
</evidence>
<evidence type="ECO:0000305" key="5"/>
<evidence type="ECO:0000312" key="6">
    <source>
        <dbReference type="Araport" id="AT5G16460"/>
    </source>
</evidence>
<evidence type="ECO:0000312" key="7">
    <source>
        <dbReference type="EMBL" id="BAB09613.1"/>
    </source>
</evidence>
<reference key="1">
    <citation type="journal article" date="1997" name="DNA Res.">
        <title>Structural analysis of Arabidopsis thaliana chromosome 5. I. Sequence features of the 1.6 Mb regions covered by twenty physically assigned P1 clones.</title>
        <authorList>
            <person name="Sato S."/>
            <person name="Kotani H."/>
            <person name="Nakamura Y."/>
            <person name="Kaneko T."/>
            <person name="Asamizu E."/>
            <person name="Fukami M."/>
            <person name="Miyajima N."/>
            <person name="Tabata S."/>
        </authorList>
    </citation>
    <scope>NUCLEOTIDE SEQUENCE [LARGE SCALE GENOMIC DNA]</scope>
    <source>
        <strain>cv. Columbia</strain>
    </source>
</reference>
<reference key="2">
    <citation type="journal article" date="2017" name="Plant J.">
        <title>Araport11: a complete reannotation of the Arabidopsis thaliana reference genome.</title>
        <authorList>
            <person name="Cheng C.Y."/>
            <person name="Krishnakumar V."/>
            <person name="Chan A.P."/>
            <person name="Thibaud-Nissen F."/>
            <person name="Schobel S."/>
            <person name="Town C.D."/>
        </authorList>
    </citation>
    <scope>GENOME REANNOTATION</scope>
    <source>
        <strain>cv. Columbia</strain>
    </source>
</reference>
<reference key="3">
    <citation type="journal article" date="2015" name="Plant Cell">
        <title>Arabidopsis SEIPIN proteins modulate triacylglycerol accumulation and influence lipid droplet proliferation.</title>
        <authorList>
            <person name="Cai Y."/>
            <person name="Goodman J.M."/>
            <person name="Pyc M."/>
            <person name="Mullen R.T."/>
            <person name="Dyer J.M."/>
            <person name="Chapman K.D."/>
        </authorList>
    </citation>
    <scope>FUNCTION</scope>
    <scope>SUBCELLULAR LOCATION</scope>
    <scope>TISSUE SPECIFICITY</scope>
    <scope>DOMAIN</scope>
</reference>
<name>SEI1_ARATH</name>
<sequence>MRILQNKTMKEQDNQLKIPEPLRADWFMVLVTIQADLIYNALVVLSSPFFLLYRSYRRAVVTVSAAEKAVKRAPAQIAGGAGRVVRRTWFGILGACHVSMVMVLALILAVVIGVGIVSLYVEKPVVVRDRLFFDYTEENPSAVFSFDKKKRSFSVPVGHSVHVSLVLWMPESEINRRIGVFQLKVELLSLKGETIARSSQPCMLRFRSKPIRLARTFVMSVPLIAGIANEAQTMRIDALKHQEKMPRTKAVRATLIPRAQTRTLPQLYEAEIVINSKPPWIKRMAYNWKWTLCVWTSMYLYVAILTALLWCFRPVLFPYTSSRTISESENLEIEVVEEEQEQVMERRRRERRNQPRRRNFATTQKSYT</sequence>
<feature type="chain" id="PRO_0000434815" description="Seipin-1">
    <location>
        <begin position="1"/>
        <end position="368"/>
    </location>
</feature>
<feature type="transmembrane region" description="Helical" evidence="1">
    <location>
        <begin position="26"/>
        <end position="46"/>
    </location>
</feature>
<feature type="transmembrane region" description="Helical" evidence="1">
    <location>
        <begin position="101"/>
        <end position="121"/>
    </location>
</feature>
<feature type="transmembrane region" description="Helical" evidence="1">
    <location>
        <begin position="292"/>
        <end position="312"/>
    </location>
</feature>
<feature type="region of interest" description="Disordered" evidence="2">
    <location>
        <begin position="344"/>
        <end position="368"/>
    </location>
</feature>
<feature type="compositionally biased region" description="Basic residues" evidence="2">
    <location>
        <begin position="346"/>
        <end position="359"/>
    </location>
</feature>
<organism>
    <name type="scientific">Arabidopsis thaliana</name>
    <name type="common">Mouse-ear cress</name>
    <dbReference type="NCBI Taxonomy" id="3702"/>
    <lineage>
        <taxon>Eukaryota</taxon>
        <taxon>Viridiplantae</taxon>
        <taxon>Streptophyta</taxon>
        <taxon>Embryophyta</taxon>
        <taxon>Tracheophyta</taxon>
        <taxon>Spermatophyta</taxon>
        <taxon>Magnoliopsida</taxon>
        <taxon>eudicotyledons</taxon>
        <taxon>Gunneridae</taxon>
        <taxon>Pentapetalae</taxon>
        <taxon>rosids</taxon>
        <taxon>malvids</taxon>
        <taxon>Brassicales</taxon>
        <taxon>Brassicaceae</taxon>
        <taxon>Camelineae</taxon>
        <taxon>Arabidopsis</taxon>
    </lineage>
</organism>